<sequence>MKALLILGLLLLSVAVQGKTFKRCELAKTLKNLGLAGYKGVSLANWMCLAKGESNYNTQAKNYNPGSKSTDYGIFQINSKWWCNDGKTPKAVNGCGVSCSALLKDDITQAVACAKKIVSQQGITAWVAWKNKCRNRDLTSYVKGCGV</sequence>
<protein>
    <recommendedName>
        <fullName>Lysozyme C, tracheal isozyme</fullName>
        <ecNumber>3.2.1.17</ecNumber>
    </recommendedName>
    <alternativeName>
        <fullName>1,4-beta-N-acetylmuramidase C</fullName>
    </alternativeName>
</protein>
<proteinExistence type="evidence at transcript level"/>
<reference key="1">
    <citation type="journal article" date="1995" name="J. Mol. Evol.">
        <title>Evolution of the bovine lysozyme gene family: changes in gene expression and reversion of function.</title>
        <authorList>
            <person name="Irwin D.M."/>
        </authorList>
    </citation>
    <scope>NUCLEOTIDE SEQUENCE [GENOMIC DNA]</scope>
</reference>
<evidence type="ECO:0000250" key="1"/>
<evidence type="ECO:0000255" key="2">
    <source>
        <dbReference type="PROSITE-ProRule" id="PRU00680"/>
    </source>
</evidence>
<keyword id="KW-0929">Antimicrobial</keyword>
<keyword id="KW-0081">Bacteriolytic enzyme</keyword>
<keyword id="KW-1015">Disulfide bond</keyword>
<keyword id="KW-0326">Glycosidase</keyword>
<keyword id="KW-0378">Hydrolase</keyword>
<keyword id="KW-1185">Reference proteome</keyword>
<keyword id="KW-0732">Signal</keyword>
<name>LYSCT_BOVIN</name>
<dbReference type="EC" id="3.2.1.17"/>
<dbReference type="EMBL" id="U19466">
    <property type="protein sequence ID" value="AAA85544.1"/>
    <property type="molecule type" value="Genomic_DNA"/>
</dbReference>
<dbReference type="PIR" id="B49315">
    <property type="entry name" value="B49315"/>
</dbReference>
<dbReference type="RefSeq" id="NP_001073805.1">
    <property type="nucleotide sequence ID" value="NM_001080336.1"/>
</dbReference>
<dbReference type="SMR" id="Q27996"/>
<dbReference type="FunCoup" id="Q27996">
    <property type="interactions" value="43"/>
</dbReference>
<dbReference type="STRING" id="9913.ENSBTAP00000064901"/>
<dbReference type="PaxDb" id="9913-ENSBTAP00000000231"/>
<dbReference type="GeneID" id="781146"/>
<dbReference type="KEGG" id="bta:781146"/>
<dbReference type="eggNOG" id="ENOG502S1S1">
    <property type="taxonomic scope" value="Eukaryota"/>
</dbReference>
<dbReference type="InParanoid" id="Q27996"/>
<dbReference type="OrthoDB" id="17373at2759"/>
<dbReference type="Proteomes" id="UP000009136">
    <property type="component" value="Unplaced"/>
</dbReference>
<dbReference type="GO" id="GO:0003796">
    <property type="term" value="F:lysozyme activity"/>
    <property type="evidence" value="ECO:0000318"/>
    <property type="project" value="GO_Central"/>
</dbReference>
<dbReference type="GO" id="GO:0050829">
    <property type="term" value="P:defense response to Gram-negative bacterium"/>
    <property type="evidence" value="ECO:0000318"/>
    <property type="project" value="GO_Central"/>
</dbReference>
<dbReference type="GO" id="GO:0050830">
    <property type="term" value="P:defense response to Gram-positive bacterium"/>
    <property type="evidence" value="ECO:0000318"/>
    <property type="project" value="GO_Central"/>
</dbReference>
<dbReference type="GO" id="GO:0031640">
    <property type="term" value="P:killing of cells of another organism"/>
    <property type="evidence" value="ECO:0007669"/>
    <property type="project" value="UniProtKB-KW"/>
</dbReference>
<dbReference type="CDD" id="cd16897">
    <property type="entry name" value="LYZ_C"/>
    <property type="match status" value="1"/>
</dbReference>
<dbReference type="FunFam" id="1.10.530.10:FF:000001">
    <property type="entry name" value="Lysozyme C"/>
    <property type="match status" value="1"/>
</dbReference>
<dbReference type="Gene3D" id="1.10.530.10">
    <property type="match status" value="1"/>
</dbReference>
<dbReference type="InterPro" id="IPR001916">
    <property type="entry name" value="Glyco_hydro_22"/>
</dbReference>
<dbReference type="InterPro" id="IPR019799">
    <property type="entry name" value="Glyco_hydro_22_CS"/>
</dbReference>
<dbReference type="InterPro" id="IPR000974">
    <property type="entry name" value="Glyco_hydro_22_lys"/>
</dbReference>
<dbReference type="InterPro" id="IPR023346">
    <property type="entry name" value="Lysozyme-like_dom_sf"/>
</dbReference>
<dbReference type="PANTHER" id="PTHR11407">
    <property type="entry name" value="LYSOZYME C"/>
    <property type="match status" value="1"/>
</dbReference>
<dbReference type="PANTHER" id="PTHR11407:SF28">
    <property type="entry name" value="LYSOZYME C"/>
    <property type="match status" value="1"/>
</dbReference>
<dbReference type="Pfam" id="PF00062">
    <property type="entry name" value="Lys"/>
    <property type="match status" value="1"/>
</dbReference>
<dbReference type="PRINTS" id="PR00137">
    <property type="entry name" value="LYSOZYME"/>
</dbReference>
<dbReference type="PRINTS" id="PR00135">
    <property type="entry name" value="LYZLACT"/>
</dbReference>
<dbReference type="SMART" id="SM00263">
    <property type="entry name" value="LYZ1"/>
    <property type="match status" value="1"/>
</dbReference>
<dbReference type="SUPFAM" id="SSF53955">
    <property type="entry name" value="Lysozyme-like"/>
    <property type="match status" value="1"/>
</dbReference>
<dbReference type="PROSITE" id="PS00128">
    <property type="entry name" value="GLYCOSYL_HYDROL_F22_1"/>
    <property type="match status" value="1"/>
</dbReference>
<dbReference type="PROSITE" id="PS51348">
    <property type="entry name" value="GLYCOSYL_HYDROL_F22_2"/>
    <property type="match status" value="1"/>
</dbReference>
<accession>Q27996</accession>
<comment type="function">
    <text>Lysozymes have primarily a bacteriolytic function; those in tissues and body fluids are associated with the monocyte-macrophage system and enhance the activity of immunoagents.</text>
</comment>
<comment type="catalytic activity">
    <reaction>
        <text>Hydrolysis of (1-&gt;4)-beta-linkages between N-acetylmuramic acid and N-acetyl-D-glucosamine residues in a peptidoglycan and between N-acetyl-D-glucosamine residues in chitodextrins.</text>
        <dbReference type="EC" id="3.2.1.17"/>
    </reaction>
</comment>
<comment type="subunit">
    <text>Monomer.</text>
</comment>
<comment type="tissue specificity">
    <text>Trachea.</text>
</comment>
<comment type="miscellaneous">
    <text>Lysozyme C is capable of both hydrolysis and transglycosylation; it also shows a slight esterase activity. It acts rapidly on both peptide-substituted and unsubstituted peptidoglycan, and slowly on chitin oligosaccharides.</text>
</comment>
<comment type="miscellaneous">
    <text>The ruminant gastric lysozymes, which digest symbiotic bacteria coming with cud from the rumen, are much more resistant to inactivation by pepsin than are other lysozymes.</text>
</comment>
<comment type="similarity">
    <text evidence="2">Belongs to the glycosyl hydrolase 22 family.</text>
</comment>
<feature type="signal peptide" evidence="1">
    <location>
        <begin position="1"/>
        <end position="18"/>
    </location>
</feature>
<feature type="chain" id="PRO_0000018457" description="Lysozyme C, tracheal isozyme">
    <location>
        <begin position="19"/>
        <end position="147"/>
    </location>
</feature>
<feature type="domain" description="C-type lysozyme" evidence="2">
    <location>
        <begin position="19"/>
        <end position="147"/>
    </location>
</feature>
<feature type="active site" evidence="2">
    <location>
        <position position="53"/>
    </location>
</feature>
<feature type="active site" evidence="2">
    <location>
        <position position="71"/>
    </location>
</feature>
<feature type="disulfide bond" evidence="2">
    <location>
        <begin position="24"/>
        <end position="145"/>
    </location>
</feature>
<feature type="disulfide bond" evidence="2">
    <location>
        <begin position="48"/>
        <end position="133"/>
    </location>
</feature>
<feature type="disulfide bond" evidence="2">
    <location>
        <begin position="83"/>
        <end position="99"/>
    </location>
</feature>
<feature type="disulfide bond" evidence="2">
    <location>
        <begin position="95"/>
        <end position="113"/>
    </location>
</feature>
<organism>
    <name type="scientific">Bos taurus</name>
    <name type="common">Bovine</name>
    <dbReference type="NCBI Taxonomy" id="9913"/>
    <lineage>
        <taxon>Eukaryota</taxon>
        <taxon>Metazoa</taxon>
        <taxon>Chordata</taxon>
        <taxon>Craniata</taxon>
        <taxon>Vertebrata</taxon>
        <taxon>Euteleostomi</taxon>
        <taxon>Mammalia</taxon>
        <taxon>Eutheria</taxon>
        <taxon>Laurasiatheria</taxon>
        <taxon>Artiodactyla</taxon>
        <taxon>Ruminantia</taxon>
        <taxon>Pecora</taxon>
        <taxon>Bovidae</taxon>
        <taxon>Bovinae</taxon>
        <taxon>Bos</taxon>
    </lineage>
</organism>